<dbReference type="EC" id="3.1.26.4" evidence="1"/>
<dbReference type="EMBL" id="BX950229">
    <property type="protein sequence ID" value="CAF30930.1"/>
    <property type="molecule type" value="Genomic_DNA"/>
</dbReference>
<dbReference type="RefSeq" id="WP_011171318.1">
    <property type="nucleotide sequence ID" value="NC_005791.1"/>
</dbReference>
<dbReference type="SMR" id="Q6LXH7"/>
<dbReference type="STRING" id="267377.MMP1374"/>
<dbReference type="EnsemblBacteria" id="CAF30930">
    <property type="protein sequence ID" value="CAF30930"/>
    <property type="gene ID" value="MMP1374"/>
</dbReference>
<dbReference type="GeneID" id="2762238"/>
<dbReference type="KEGG" id="mmp:MMP1374"/>
<dbReference type="PATRIC" id="fig|267377.15.peg.1409"/>
<dbReference type="eggNOG" id="arCOG04121">
    <property type="taxonomic scope" value="Archaea"/>
</dbReference>
<dbReference type="HOGENOM" id="CLU_036532_0_4_2"/>
<dbReference type="OrthoDB" id="33866at2157"/>
<dbReference type="Proteomes" id="UP000000590">
    <property type="component" value="Chromosome"/>
</dbReference>
<dbReference type="GO" id="GO:0005737">
    <property type="term" value="C:cytoplasm"/>
    <property type="evidence" value="ECO:0007669"/>
    <property type="project" value="UniProtKB-SubCell"/>
</dbReference>
<dbReference type="GO" id="GO:0032299">
    <property type="term" value="C:ribonuclease H2 complex"/>
    <property type="evidence" value="ECO:0007669"/>
    <property type="project" value="TreeGrafter"/>
</dbReference>
<dbReference type="GO" id="GO:0030145">
    <property type="term" value="F:manganese ion binding"/>
    <property type="evidence" value="ECO:0007669"/>
    <property type="project" value="UniProtKB-UniRule"/>
</dbReference>
<dbReference type="GO" id="GO:0003723">
    <property type="term" value="F:RNA binding"/>
    <property type="evidence" value="ECO:0007669"/>
    <property type="project" value="InterPro"/>
</dbReference>
<dbReference type="GO" id="GO:0004523">
    <property type="term" value="F:RNA-DNA hybrid ribonuclease activity"/>
    <property type="evidence" value="ECO:0007669"/>
    <property type="project" value="UniProtKB-UniRule"/>
</dbReference>
<dbReference type="GO" id="GO:0043137">
    <property type="term" value="P:DNA replication, removal of RNA primer"/>
    <property type="evidence" value="ECO:0007669"/>
    <property type="project" value="TreeGrafter"/>
</dbReference>
<dbReference type="GO" id="GO:0006298">
    <property type="term" value="P:mismatch repair"/>
    <property type="evidence" value="ECO:0007669"/>
    <property type="project" value="TreeGrafter"/>
</dbReference>
<dbReference type="CDD" id="cd07180">
    <property type="entry name" value="RNase_HII_archaea_like"/>
    <property type="match status" value="1"/>
</dbReference>
<dbReference type="FunFam" id="1.10.10.460:FF:000001">
    <property type="entry name" value="Ribonuclease"/>
    <property type="match status" value="1"/>
</dbReference>
<dbReference type="Gene3D" id="3.30.420.10">
    <property type="entry name" value="Ribonuclease H-like superfamily/Ribonuclease H"/>
    <property type="match status" value="1"/>
</dbReference>
<dbReference type="Gene3D" id="1.10.10.460">
    <property type="entry name" value="Ribonuclease hii. Domain 2"/>
    <property type="match status" value="1"/>
</dbReference>
<dbReference type="HAMAP" id="MF_00052_A">
    <property type="entry name" value="RNase_HII_A"/>
    <property type="match status" value="1"/>
</dbReference>
<dbReference type="InterPro" id="IPR004649">
    <property type="entry name" value="RNase_H2_suA"/>
</dbReference>
<dbReference type="InterPro" id="IPR001352">
    <property type="entry name" value="RNase_HII/HIII"/>
</dbReference>
<dbReference type="InterPro" id="IPR024567">
    <property type="entry name" value="RNase_HII/HIII_dom"/>
</dbReference>
<dbReference type="InterPro" id="IPR020787">
    <property type="entry name" value="RNase_HII_arc"/>
</dbReference>
<dbReference type="InterPro" id="IPR023160">
    <property type="entry name" value="RNase_HII_hlx-loop-hlx_cap_dom"/>
</dbReference>
<dbReference type="InterPro" id="IPR012337">
    <property type="entry name" value="RNaseH-like_sf"/>
</dbReference>
<dbReference type="InterPro" id="IPR036397">
    <property type="entry name" value="RNaseH_sf"/>
</dbReference>
<dbReference type="NCBIfam" id="TIGR00729">
    <property type="entry name" value="ribonuclease HII"/>
    <property type="match status" value="1"/>
</dbReference>
<dbReference type="PANTHER" id="PTHR10954:SF23">
    <property type="entry name" value="RIBONUCLEASE"/>
    <property type="match status" value="1"/>
</dbReference>
<dbReference type="PANTHER" id="PTHR10954">
    <property type="entry name" value="RIBONUCLEASE H2 SUBUNIT A"/>
    <property type="match status" value="1"/>
</dbReference>
<dbReference type="Pfam" id="PF01351">
    <property type="entry name" value="RNase_HII"/>
    <property type="match status" value="1"/>
</dbReference>
<dbReference type="SUPFAM" id="SSF53098">
    <property type="entry name" value="Ribonuclease H-like"/>
    <property type="match status" value="1"/>
</dbReference>
<dbReference type="PROSITE" id="PS51975">
    <property type="entry name" value="RNASE_H_2"/>
    <property type="match status" value="1"/>
</dbReference>
<proteinExistence type="inferred from homology"/>
<keyword id="KW-0963">Cytoplasm</keyword>
<keyword id="KW-0255">Endonuclease</keyword>
<keyword id="KW-0378">Hydrolase</keyword>
<keyword id="KW-0464">Manganese</keyword>
<keyword id="KW-0479">Metal-binding</keyword>
<keyword id="KW-0540">Nuclease</keyword>
<keyword id="KW-1185">Reference proteome</keyword>
<accession>Q6LXH7</accession>
<name>RNH2_METMP</name>
<comment type="function">
    <text evidence="1">Endonuclease that specifically degrades the RNA of RNA-DNA hybrids.</text>
</comment>
<comment type="catalytic activity">
    <reaction evidence="1">
        <text>Endonucleolytic cleavage to 5'-phosphomonoester.</text>
        <dbReference type="EC" id="3.1.26.4"/>
    </reaction>
</comment>
<comment type="cofactor">
    <cofactor evidence="1">
        <name>Mn(2+)</name>
        <dbReference type="ChEBI" id="CHEBI:29035"/>
    </cofactor>
    <cofactor evidence="1">
        <name>Mg(2+)</name>
        <dbReference type="ChEBI" id="CHEBI:18420"/>
    </cofactor>
    <text evidence="1">Manganese or magnesium. Binds 1 divalent metal ion per monomer in the absence of substrate. May bind a second metal ion after substrate binding.</text>
</comment>
<comment type="subcellular location">
    <subcellularLocation>
        <location evidence="1">Cytoplasm</location>
    </subcellularLocation>
</comment>
<comment type="similarity">
    <text evidence="1">Belongs to the RNase HII family.</text>
</comment>
<feature type="chain" id="PRO_0000111665" description="Ribonuclease HII">
    <location>
        <begin position="1"/>
        <end position="242"/>
    </location>
</feature>
<feature type="domain" description="RNase H type-2" evidence="2">
    <location>
        <begin position="21"/>
        <end position="234"/>
    </location>
</feature>
<feature type="binding site" evidence="1">
    <location>
        <position position="27"/>
    </location>
    <ligand>
        <name>a divalent metal cation</name>
        <dbReference type="ChEBI" id="CHEBI:60240"/>
    </ligand>
</feature>
<feature type="binding site" evidence="1">
    <location>
        <position position="28"/>
    </location>
    <ligand>
        <name>a divalent metal cation</name>
        <dbReference type="ChEBI" id="CHEBI:60240"/>
    </ligand>
</feature>
<feature type="binding site" evidence="1">
    <location>
        <position position="128"/>
    </location>
    <ligand>
        <name>a divalent metal cation</name>
        <dbReference type="ChEBI" id="CHEBI:60240"/>
    </ligand>
</feature>
<gene>
    <name evidence="1" type="primary">rnhB</name>
    <name type="ordered locus">MMP1374</name>
</gene>
<evidence type="ECO:0000255" key="1">
    <source>
        <dbReference type="HAMAP-Rule" id="MF_00052"/>
    </source>
</evidence>
<evidence type="ECO:0000255" key="2">
    <source>
        <dbReference type="PROSITE-ProRule" id="PRU01319"/>
    </source>
</evidence>
<reference key="1">
    <citation type="journal article" date="2004" name="J. Bacteriol.">
        <title>Complete genome sequence of the genetically tractable hydrogenotrophic methanogen Methanococcus maripaludis.</title>
        <authorList>
            <person name="Hendrickson E.L."/>
            <person name="Kaul R."/>
            <person name="Zhou Y."/>
            <person name="Bovee D."/>
            <person name="Chapman P."/>
            <person name="Chung J."/>
            <person name="Conway de Macario E."/>
            <person name="Dodsworth J.A."/>
            <person name="Gillett W."/>
            <person name="Graham D.E."/>
            <person name="Hackett M."/>
            <person name="Haydock A.K."/>
            <person name="Kang A."/>
            <person name="Land M.L."/>
            <person name="Levy R."/>
            <person name="Lie T.J."/>
            <person name="Major T.A."/>
            <person name="Moore B.C."/>
            <person name="Porat I."/>
            <person name="Palmeiri A."/>
            <person name="Rouse G."/>
            <person name="Saenphimmachak C."/>
            <person name="Soell D."/>
            <person name="Van Dien S."/>
            <person name="Wang T."/>
            <person name="Whitman W.B."/>
            <person name="Xia Q."/>
            <person name="Zhang Y."/>
            <person name="Larimer F.W."/>
            <person name="Olson M.V."/>
            <person name="Leigh J.A."/>
        </authorList>
    </citation>
    <scope>NUCLEOTIDE SEQUENCE [LARGE SCALE GENOMIC DNA]</scope>
    <source>
        <strain>DSM 14266 / JCM 13030 / NBRC 101832 / S2 / LL</strain>
    </source>
</reference>
<protein>
    <recommendedName>
        <fullName evidence="1">Ribonuclease HII</fullName>
        <shortName evidence="1">RNase HII</shortName>
        <ecNumber evidence="1">3.1.26.4</ecNumber>
    </recommendedName>
</protein>
<organism>
    <name type="scientific">Methanococcus maripaludis (strain DSM 14266 / JCM 13030 / NBRC 101832 / S2 / LL)</name>
    <dbReference type="NCBI Taxonomy" id="267377"/>
    <lineage>
        <taxon>Archaea</taxon>
        <taxon>Methanobacteriati</taxon>
        <taxon>Methanobacteriota</taxon>
        <taxon>Methanomada group</taxon>
        <taxon>Methanococci</taxon>
        <taxon>Methanococcales</taxon>
        <taxon>Methanococcaceae</taxon>
        <taxon>Methanococcus</taxon>
    </lineage>
</organism>
<sequence>MSEDINNNLNNSDNSNGSNEKIIVGLDEAGRGPVLGPMVIASVKIDEKNLYKLNDLELKDSKQLSKKKREELYIIINEMCDVEKIVIDPETIDKQMEIINLNKIELSAFSKLSNHFIRENDNISIYIDACSSSEQSFSNQFKAKLINKNVEIIAEHKADENYKIVSAASIIAKVTRDRVIEEYKETFGEIGSGYPSDPKTKKFLKNYVYENRTLPKIARKSWATSKNLLKEIEESKIFQWVK</sequence>